<sequence>MSLLSKTRELNTLLQKHKGIAVDFKDVAQTISSVTVTNVFIVSRRGKILGSSLNELLKSQRIIQMLEERHIPSEYTERLMEVKQTESNIDIDNVLTVFPPENRELFIDSRTTIFPILGGGERLGTLVLGRVHDDFNENDLVLGEYAATVIGMEILREKHSEVEKEARDKAAITMAINSLSYSEKEAIEHIFEELGGTEGLLIASKVADGVGITRSVIVNALRKLESAGVIESRSLGMKGTFIKVKKEKFLDELEKSK</sequence>
<organism>
    <name type="scientific">Staphylococcus aureus (strain bovine RF122 / ET3-1)</name>
    <dbReference type="NCBI Taxonomy" id="273036"/>
    <lineage>
        <taxon>Bacteria</taxon>
        <taxon>Bacillati</taxon>
        <taxon>Bacillota</taxon>
        <taxon>Bacilli</taxon>
        <taxon>Bacillales</taxon>
        <taxon>Staphylococcaceae</taxon>
        <taxon>Staphylococcus</taxon>
    </lineage>
</organism>
<comment type="function">
    <text evidence="1">DNA-binding global transcriptional regulator which is involved in the adaptive response to starvation and acts by directly or indirectly controlling the expression of numerous genes in response to nutrient availability. During rapid exponential growth, CodY is highly active and represses genes whose products allow adaptation to nutrient depletion.</text>
</comment>
<comment type="subcellular location">
    <subcellularLocation>
        <location evidence="1">Cytoplasm</location>
    </subcellularLocation>
</comment>
<comment type="similarity">
    <text evidence="1">Belongs to the CodY family.</text>
</comment>
<dbReference type="EMBL" id="AJ938182">
    <property type="protein sequence ID" value="CAI80806.1"/>
    <property type="molecule type" value="Genomic_DNA"/>
</dbReference>
<dbReference type="RefSeq" id="WP_000055336.1">
    <property type="nucleotide sequence ID" value="NC_007622.1"/>
</dbReference>
<dbReference type="SMR" id="Q2YXL3"/>
<dbReference type="KEGG" id="sab:SAB1117"/>
<dbReference type="HOGENOM" id="CLU_089581_0_0_9"/>
<dbReference type="GO" id="GO:0005737">
    <property type="term" value="C:cytoplasm"/>
    <property type="evidence" value="ECO:0007669"/>
    <property type="project" value="UniProtKB-SubCell"/>
</dbReference>
<dbReference type="GO" id="GO:0003677">
    <property type="term" value="F:DNA binding"/>
    <property type="evidence" value="ECO:0007669"/>
    <property type="project" value="UniProtKB-UniRule"/>
</dbReference>
<dbReference type="GO" id="GO:0003700">
    <property type="term" value="F:DNA-binding transcription factor activity"/>
    <property type="evidence" value="ECO:0007669"/>
    <property type="project" value="InterPro"/>
</dbReference>
<dbReference type="GO" id="GO:0005525">
    <property type="term" value="F:GTP binding"/>
    <property type="evidence" value="ECO:0007669"/>
    <property type="project" value="InterPro"/>
</dbReference>
<dbReference type="GO" id="GO:0045892">
    <property type="term" value="P:negative regulation of DNA-templated transcription"/>
    <property type="evidence" value="ECO:0007669"/>
    <property type="project" value="UniProtKB-UniRule"/>
</dbReference>
<dbReference type="FunFam" id="1.10.10.10:FF:000034">
    <property type="entry name" value="GTP-sensing transcriptional pleiotropic repressor CodY"/>
    <property type="match status" value="1"/>
</dbReference>
<dbReference type="FunFam" id="3.30.450.40:FF:000003">
    <property type="entry name" value="GTP-sensing transcriptional pleiotropic repressor CodY"/>
    <property type="match status" value="1"/>
</dbReference>
<dbReference type="Gene3D" id="3.30.450.40">
    <property type="match status" value="1"/>
</dbReference>
<dbReference type="Gene3D" id="1.10.10.10">
    <property type="entry name" value="Winged helix-like DNA-binding domain superfamily/Winged helix DNA-binding domain"/>
    <property type="match status" value="1"/>
</dbReference>
<dbReference type="HAMAP" id="MF_00621">
    <property type="entry name" value="HTH_type_CodY"/>
    <property type="match status" value="1"/>
</dbReference>
<dbReference type="InterPro" id="IPR014154">
    <property type="entry name" value="CodY"/>
</dbReference>
<dbReference type="InterPro" id="IPR029016">
    <property type="entry name" value="GAF-like_dom_sf"/>
</dbReference>
<dbReference type="InterPro" id="IPR013198">
    <property type="entry name" value="GTP_trans_reg_CodY_C"/>
</dbReference>
<dbReference type="InterPro" id="IPR010312">
    <property type="entry name" value="Transc_reg_CodY_N"/>
</dbReference>
<dbReference type="InterPro" id="IPR036388">
    <property type="entry name" value="WH-like_DNA-bd_sf"/>
</dbReference>
<dbReference type="InterPro" id="IPR036390">
    <property type="entry name" value="WH_DNA-bd_sf"/>
</dbReference>
<dbReference type="NCBIfam" id="TIGR02787">
    <property type="entry name" value="codY_Gpos"/>
    <property type="match status" value="1"/>
</dbReference>
<dbReference type="NCBIfam" id="NF003170">
    <property type="entry name" value="PRK04158.1"/>
    <property type="match status" value="1"/>
</dbReference>
<dbReference type="PANTHER" id="PTHR40062:SF1">
    <property type="entry name" value="GLOBAL TRANSCRIPTIONAL REGULATOR CODY"/>
    <property type="match status" value="1"/>
</dbReference>
<dbReference type="PANTHER" id="PTHR40062">
    <property type="entry name" value="GTP-SENSING TRANSCRIPTIONAL PLEIOTROPIC REPRESSOR CODY"/>
    <property type="match status" value="1"/>
</dbReference>
<dbReference type="Pfam" id="PF06018">
    <property type="entry name" value="CodY"/>
    <property type="match status" value="1"/>
</dbReference>
<dbReference type="Pfam" id="PF08222">
    <property type="entry name" value="HTH_CodY"/>
    <property type="match status" value="1"/>
</dbReference>
<dbReference type="PIRSF" id="PIRSF011572">
    <property type="entry name" value="GTP_sensing_CodY"/>
    <property type="match status" value="1"/>
</dbReference>
<dbReference type="SUPFAM" id="SSF46785">
    <property type="entry name" value="Winged helix' DNA-binding domain"/>
    <property type="match status" value="1"/>
</dbReference>
<gene>
    <name evidence="1" type="primary">codY</name>
    <name type="ordered locus">SAB1117</name>
</gene>
<feature type="chain" id="PRO_1000051544" description="Global transcriptional regulator CodY">
    <location>
        <begin position="1"/>
        <end position="257"/>
    </location>
</feature>
<feature type="DNA-binding region" description="H-T-H motif" evidence="1">
    <location>
        <begin position="203"/>
        <end position="222"/>
    </location>
</feature>
<feature type="region of interest" description="GAF domain" evidence="1">
    <location>
        <begin position="1"/>
        <end position="155"/>
    </location>
</feature>
<protein>
    <recommendedName>
        <fullName evidence="1">Global transcriptional regulator CodY</fullName>
    </recommendedName>
</protein>
<name>CODY_STAAB</name>
<keyword id="KW-0963">Cytoplasm</keyword>
<keyword id="KW-0238">DNA-binding</keyword>
<keyword id="KW-0678">Repressor</keyword>
<keyword id="KW-0804">Transcription</keyword>
<keyword id="KW-0805">Transcription regulation</keyword>
<accession>Q2YXL3</accession>
<reference key="1">
    <citation type="journal article" date="2007" name="PLoS ONE">
        <title>Molecular correlates of host specialization in Staphylococcus aureus.</title>
        <authorList>
            <person name="Herron-Olson L."/>
            <person name="Fitzgerald J.R."/>
            <person name="Musser J.M."/>
            <person name="Kapur V."/>
        </authorList>
    </citation>
    <scope>NUCLEOTIDE SEQUENCE [LARGE SCALE GENOMIC DNA]</scope>
    <source>
        <strain>bovine RF122 / ET3-1</strain>
    </source>
</reference>
<proteinExistence type="inferred from homology"/>
<evidence type="ECO:0000255" key="1">
    <source>
        <dbReference type="HAMAP-Rule" id="MF_00621"/>
    </source>
</evidence>